<keyword id="KW-0963">Cytoplasm</keyword>
<keyword id="KW-0521">NADP</keyword>
<keyword id="KW-0560">Oxidoreductase</keyword>
<keyword id="KW-0671">Queuosine biosynthesis</keyword>
<keyword id="KW-1185">Reference proteome</keyword>
<reference key="1">
    <citation type="journal article" date="2002" name="Proc. Natl. Acad. Sci. U.S.A.">
        <title>Extensive mosaic structure revealed by the complete genome sequence of uropathogenic Escherichia coli.</title>
        <authorList>
            <person name="Welch R.A."/>
            <person name="Burland V."/>
            <person name="Plunkett G. III"/>
            <person name="Redford P."/>
            <person name="Roesch P."/>
            <person name="Rasko D."/>
            <person name="Buckles E.L."/>
            <person name="Liou S.-R."/>
            <person name="Boutin A."/>
            <person name="Hackett J."/>
            <person name="Stroud D."/>
            <person name="Mayhew G.F."/>
            <person name="Rose D.J."/>
            <person name="Zhou S."/>
            <person name="Schwartz D.C."/>
            <person name="Perna N.T."/>
            <person name="Mobley H.L.T."/>
            <person name="Donnenberg M.S."/>
            <person name="Blattner F.R."/>
        </authorList>
    </citation>
    <scope>NUCLEOTIDE SEQUENCE [LARGE SCALE GENOMIC DNA]</scope>
    <source>
        <strain>CFT073 / ATCC 700928 / UPEC</strain>
    </source>
</reference>
<dbReference type="EC" id="1.7.1.13" evidence="1"/>
<dbReference type="EMBL" id="AE014075">
    <property type="protein sequence ID" value="AAN81807.1"/>
    <property type="molecule type" value="Genomic_DNA"/>
</dbReference>
<dbReference type="RefSeq" id="WP_000100429.1">
    <property type="nucleotide sequence ID" value="NZ_CP051263.1"/>
</dbReference>
<dbReference type="SMR" id="Q8FEF7"/>
<dbReference type="STRING" id="199310.c3360"/>
<dbReference type="KEGG" id="ecc:c3360"/>
<dbReference type="eggNOG" id="COG0780">
    <property type="taxonomic scope" value="Bacteria"/>
</dbReference>
<dbReference type="eggNOG" id="COG2904">
    <property type="taxonomic scope" value="Bacteria"/>
</dbReference>
<dbReference type="HOGENOM" id="CLU_054738_0_0_6"/>
<dbReference type="BioCyc" id="ECOL199310:C3360-MONOMER"/>
<dbReference type="UniPathway" id="UPA00392"/>
<dbReference type="Proteomes" id="UP000001410">
    <property type="component" value="Chromosome"/>
</dbReference>
<dbReference type="GO" id="GO:0005737">
    <property type="term" value="C:cytoplasm"/>
    <property type="evidence" value="ECO:0007669"/>
    <property type="project" value="UniProtKB-SubCell"/>
</dbReference>
<dbReference type="GO" id="GO:0033739">
    <property type="term" value="F:preQ1 synthase activity"/>
    <property type="evidence" value="ECO:0007669"/>
    <property type="project" value="UniProtKB-UniRule"/>
</dbReference>
<dbReference type="GO" id="GO:0008616">
    <property type="term" value="P:queuosine biosynthetic process"/>
    <property type="evidence" value="ECO:0007669"/>
    <property type="project" value="UniProtKB-UniRule"/>
</dbReference>
<dbReference type="GO" id="GO:0006400">
    <property type="term" value="P:tRNA modification"/>
    <property type="evidence" value="ECO:0007669"/>
    <property type="project" value="UniProtKB-UniRule"/>
</dbReference>
<dbReference type="FunFam" id="3.30.1130.10:FF:000004">
    <property type="entry name" value="NADPH-dependent 7-cyano-7-deazaguanine reductase"/>
    <property type="match status" value="1"/>
</dbReference>
<dbReference type="FunFam" id="3.30.1130.10:FF:000006">
    <property type="entry name" value="NADPH-dependent 7-cyano-7-deazaguanine reductase"/>
    <property type="match status" value="1"/>
</dbReference>
<dbReference type="Gene3D" id="3.30.1130.10">
    <property type="match status" value="2"/>
</dbReference>
<dbReference type="HAMAP" id="MF_00817">
    <property type="entry name" value="QueF_type2"/>
    <property type="match status" value="1"/>
</dbReference>
<dbReference type="InterPro" id="IPR043133">
    <property type="entry name" value="GTP-CH-I_C/QueF"/>
</dbReference>
<dbReference type="InterPro" id="IPR050084">
    <property type="entry name" value="NADPH_dep_7-cyano-7-deazaG_red"/>
</dbReference>
<dbReference type="InterPro" id="IPR029500">
    <property type="entry name" value="QueF"/>
</dbReference>
<dbReference type="InterPro" id="IPR029139">
    <property type="entry name" value="QueF_N"/>
</dbReference>
<dbReference type="InterPro" id="IPR016428">
    <property type="entry name" value="QueF_type2"/>
</dbReference>
<dbReference type="NCBIfam" id="TIGR03138">
    <property type="entry name" value="QueF"/>
    <property type="match status" value="1"/>
</dbReference>
<dbReference type="PANTHER" id="PTHR34354">
    <property type="entry name" value="NADPH-DEPENDENT 7-CYANO-7-DEAZAGUANINE REDUCTASE"/>
    <property type="match status" value="1"/>
</dbReference>
<dbReference type="PANTHER" id="PTHR34354:SF1">
    <property type="entry name" value="NADPH-DEPENDENT 7-CYANO-7-DEAZAGUANINE REDUCTASE"/>
    <property type="match status" value="1"/>
</dbReference>
<dbReference type="Pfam" id="PF14489">
    <property type="entry name" value="QueF"/>
    <property type="match status" value="1"/>
</dbReference>
<dbReference type="Pfam" id="PF14819">
    <property type="entry name" value="QueF_N"/>
    <property type="match status" value="1"/>
</dbReference>
<dbReference type="PIRSF" id="PIRSF004750">
    <property type="entry name" value="Nitrile_oxidored_YqcD_prd"/>
    <property type="match status" value="1"/>
</dbReference>
<dbReference type="SUPFAM" id="SSF55620">
    <property type="entry name" value="Tetrahydrobiopterin biosynthesis enzymes-like"/>
    <property type="match status" value="1"/>
</dbReference>
<accession>Q8FEF7</accession>
<name>QUEF_ECOL6</name>
<sequence>MSSYANHQALAGLTLGKSTDYRDTYDASLLQGVPRSLNRDPLGLKADNLPFHGTDIWTLYELSWLNAKGLPQVAVGHVELDYTSVNLIESKSFKLYLNSFNQTRFNNWDEVRQTLERDLSTCAQGKVSVALYRLDELEGQPIGHFNGTCIDDQDITIDNYEFTTDYLENATSGEKVVEETLVSHLLKSNCLITHQPDWGSIQIQYRGRQIDREKLLRYLVSFRHHNEFHEQCVERIFNDLLRFCQPEKLSVYARYTRRGGLDINPWRSNNDFVPSTTRLVRQ</sequence>
<organism>
    <name type="scientific">Escherichia coli O6:H1 (strain CFT073 / ATCC 700928 / UPEC)</name>
    <dbReference type="NCBI Taxonomy" id="199310"/>
    <lineage>
        <taxon>Bacteria</taxon>
        <taxon>Pseudomonadati</taxon>
        <taxon>Pseudomonadota</taxon>
        <taxon>Gammaproteobacteria</taxon>
        <taxon>Enterobacterales</taxon>
        <taxon>Enterobacteriaceae</taxon>
        <taxon>Escherichia</taxon>
    </lineage>
</organism>
<feature type="chain" id="PRO_0000163033" description="NADPH-dependent 7-cyano-7-deazaguanine reductase">
    <location>
        <begin position="1"/>
        <end position="282"/>
    </location>
</feature>
<feature type="active site" description="Thioimide intermediate" evidence="1">
    <location>
        <position position="190"/>
    </location>
</feature>
<feature type="active site" description="Proton donor" evidence="1">
    <location>
        <position position="197"/>
    </location>
</feature>
<feature type="binding site" evidence="1">
    <location>
        <begin position="88"/>
        <end position="90"/>
    </location>
    <ligand>
        <name>substrate</name>
    </ligand>
</feature>
<feature type="binding site" evidence="1">
    <location>
        <begin position="90"/>
        <end position="91"/>
    </location>
    <ligand>
        <name>NADPH</name>
        <dbReference type="ChEBI" id="CHEBI:57783"/>
    </ligand>
</feature>
<feature type="binding site" evidence="1">
    <location>
        <begin position="229"/>
        <end position="230"/>
    </location>
    <ligand>
        <name>substrate</name>
    </ligand>
</feature>
<feature type="binding site" evidence="1">
    <location>
        <begin position="258"/>
        <end position="259"/>
    </location>
    <ligand>
        <name>NADPH</name>
        <dbReference type="ChEBI" id="CHEBI:57783"/>
    </ligand>
</feature>
<comment type="function">
    <text evidence="1">Catalyzes the NADPH-dependent reduction of 7-cyano-7-deazaguanine (preQ0) to 7-aminomethyl-7-deazaguanine (preQ1).</text>
</comment>
<comment type="catalytic activity">
    <reaction evidence="1">
        <text>7-aminomethyl-7-carbaguanine + 2 NADP(+) = 7-cyano-7-deazaguanine + 2 NADPH + 3 H(+)</text>
        <dbReference type="Rhea" id="RHEA:13409"/>
        <dbReference type="ChEBI" id="CHEBI:15378"/>
        <dbReference type="ChEBI" id="CHEBI:45075"/>
        <dbReference type="ChEBI" id="CHEBI:57783"/>
        <dbReference type="ChEBI" id="CHEBI:58349"/>
        <dbReference type="ChEBI" id="CHEBI:58703"/>
        <dbReference type="EC" id="1.7.1.13"/>
    </reaction>
</comment>
<comment type="pathway">
    <text evidence="1">tRNA modification; tRNA-queuosine biosynthesis.</text>
</comment>
<comment type="subunit">
    <text evidence="1">Homodimer.</text>
</comment>
<comment type="subcellular location">
    <subcellularLocation>
        <location evidence="1">Cytoplasm</location>
    </subcellularLocation>
</comment>
<comment type="similarity">
    <text evidence="1">Belongs to the GTP cyclohydrolase I family. QueF type 2 subfamily.</text>
</comment>
<evidence type="ECO:0000255" key="1">
    <source>
        <dbReference type="HAMAP-Rule" id="MF_00817"/>
    </source>
</evidence>
<gene>
    <name evidence="1" type="primary">queF</name>
    <name type="ordered locus">c3360</name>
</gene>
<protein>
    <recommendedName>
        <fullName evidence="1">NADPH-dependent 7-cyano-7-deazaguanine reductase</fullName>
        <ecNumber evidence="1">1.7.1.13</ecNumber>
    </recommendedName>
    <alternativeName>
        <fullName evidence="1">7-cyano-7-carbaguanine reductase</fullName>
    </alternativeName>
    <alternativeName>
        <fullName evidence="1">NADPH-dependent nitrile oxidoreductase</fullName>
    </alternativeName>
    <alternativeName>
        <fullName evidence="1">PreQ(0) reductase</fullName>
    </alternativeName>
</protein>
<proteinExistence type="inferred from homology"/>